<keyword id="KW-0067">ATP-binding</keyword>
<keyword id="KW-0131">Cell cycle</keyword>
<keyword id="KW-0132">Cell division</keyword>
<keyword id="KW-0133">Cell shape</keyword>
<keyword id="KW-0961">Cell wall biogenesis/degradation</keyword>
<keyword id="KW-0963">Cytoplasm</keyword>
<keyword id="KW-0436">Ligase</keyword>
<keyword id="KW-0547">Nucleotide-binding</keyword>
<keyword id="KW-0573">Peptidoglycan synthesis</keyword>
<name>MURC_STRPM</name>
<dbReference type="EC" id="6.3.2.8" evidence="1"/>
<dbReference type="EMBL" id="CP000056">
    <property type="protein sequence ID" value="AAX71396.1"/>
    <property type="molecule type" value="Genomic_DNA"/>
</dbReference>
<dbReference type="RefSeq" id="WP_011284520.1">
    <property type="nucleotide sequence ID" value="NC_007296.2"/>
</dbReference>
<dbReference type="SMR" id="Q48V60"/>
<dbReference type="KEGG" id="spb:M28_Spy0282"/>
<dbReference type="HOGENOM" id="CLU_028104_1_0_9"/>
<dbReference type="UniPathway" id="UPA00219"/>
<dbReference type="GO" id="GO:0005737">
    <property type="term" value="C:cytoplasm"/>
    <property type="evidence" value="ECO:0007669"/>
    <property type="project" value="UniProtKB-SubCell"/>
</dbReference>
<dbReference type="GO" id="GO:0005524">
    <property type="term" value="F:ATP binding"/>
    <property type="evidence" value="ECO:0007669"/>
    <property type="project" value="UniProtKB-UniRule"/>
</dbReference>
<dbReference type="GO" id="GO:0008763">
    <property type="term" value="F:UDP-N-acetylmuramate-L-alanine ligase activity"/>
    <property type="evidence" value="ECO:0007669"/>
    <property type="project" value="UniProtKB-UniRule"/>
</dbReference>
<dbReference type="GO" id="GO:0051301">
    <property type="term" value="P:cell division"/>
    <property type="evidence" value="ECO:0007669"/>
    <property type="project" value="UniProtKB-KW"/>
</dbReference>
<dbReference type="GO" id="GO:0071555">
    <property type="term" value="P:cell wall organization"/>
    <property type="evidence" value="ECO:0007669"/>
    <property type="project" value="UniProtKB-KW"/>
</dbReference>
<dbReference type="GO" id="GO:0009252">
    <property type="term" value="P:peptidoglycan biosynthetic process"/>
    <property type="evidence" value="ECO:0007669"/>
    <property type="project" value="UniProtKB-UniRule"/>
</dbReference>
<dbReference type="GO" id="GO:0008360">
    <property type="term" value="P:regulation of cell shape"/>
    <property type="evidence" value="ECO:0007669"/>
    <property type="project" value="UniProtKB-KW"/>
</dbReference>
<dbReference type="Gene3D" id="3.90.190.20">
    <property type="entry name" value="Mur ligase, C-terminal domain"/>
    <property type="match status" value="1"/>
</dbReference>
<dbReference type="Gene3D" id="3.40.1190.10">
    <property type="entry name" value="Mur-like, catalytic domain"/>
    <property type="match status" value="1"/>
</dbReference>
<dbReference type="Gene3D" id="3.40.50.720">
    <property type="entry name" value="NAD(P)-binding Rossmann-like Domain"/>
    <property type="match status" value="1"/>
</dbReference>
<dbReference type="HAMAP" id="MF_00046">
    <property type="entry name" value="MurC"/>
    <property type="match status" value="1"/>
</dbReference>
<dbReference type="InterPro" id="IPR036565">
    <property type="entry name" value="Mur-like_cat_sf"/>
</dbReference>
<dbReference type="InterPro" id="IPR004101">
    <property type="entry name" value="Mur_ligase_C"/>
</dbReference>
<dbReference type="InterPro" id="IPR036615">
    <property type="entry name" value="Mur_ligase_C_dom_sf"/>
</dbReference>
<dbReference type="InterPro" id="IPR013221">
    <property type="entry name" value="Mur_ligase_cen"/>
</dbReference>
<dbReference type="InterPro" id="IPR000713">
    <property type="entry name" value="Mur_ligase_N"/>
</dbReference>
<dbReference type="InterPro" id="IPR050061">
    <property type="entry name" value="MurCDEF_pg_biosynth"/>
</dbReference>
<dbReference type="InterPro" id="IPR005758">
    <property type="entry name" value="UDP-N-AcMur_Ala_ligase_MurC"/>
</dbReference>
<dbReference type="NCBIfam" id="TIGR01082">
    <property type="entry name" value="murC"/>
    <property type="match status" value="1"/>
</dbReference>
<dbReference type="PANTHER" id="PTHR43445:SF3">
    <property type="entry name" value="UDP-N-ACETYLMURAMATE--L-ALANINE LIGASE"/>
    <property type="match status" value="1"/>
</dbReference>
<dbReference type="PANTHER" id="PTHR43445">
    <property type="entry name" value="UDP-N-ACETYLMURAMATE--L-ALANINE LIGASE-RELATED"/>
    <property type="match status" value="1"/>
</dbReference>
<dbReference type="Pfam" id="PF01225">
    <property type="entry name" value="Mur_ligase"/>
    <property type="match status" value="1"/>
</dbReference>
<dbReference type="Pfam" id="PF02875">
    <property type="entry name" value="Mur_ligase_C"/>
    <property type="match status" value="1"/>
</dbReference>
<dbReference type="Pfam" id="PF08245">
    <property type="entry name" value="Mur_ligase_M"/>
    <property type="match status" value="1"/>
</dbReference>
<dbReference type="SUPFAM" id="SSF51984">
    <property type="entry name" value="MurCD N-terminal domain"/>
    <property type="match status" value="1"/>
</dbReference>
<dbReference type="SUPFAM" id="SSF53623">
    <property type="entry name" value="MurD-like peptide ligases, catalytic domain"/>
    <property type="match status" value="1"/>
</dbReference>
<dbReference type="SUPFAM" id="SSF53244">
    <property type="entry name" value="MurD-like peptide ligases, peptide-binding domain"/>
    <property type="match status" value="1"/>
</dbReference>
<evidence type="ECO:0000255" key="1">
    <source>
        <dbReference type="HAMAP-Rule" id="MF_00046"/>
    </source>
</evidence>
<comment type="function">
    <text evidence="1">Cell wall formation.</text>
</comment>
<comment type="catalytic activity">
    <reaction evidence="1">
        <text>UDP-N-acetyl-alpha-D-muramate + L-alanine + ATP = UDP-N-acetyl-alpha-D-muramoyl-L-alanine + ADP + phosphate + H(+)</text>
        <dbReference type="Rhea" id="RHEA:23372"/>
        <dbReference type="ChEBI" id="CHEBI:15378"/>
        <dbReference type="ChEBI" id="CHEBI:30616"/>
        <dbReference type="ChEBI" id="CHEBI:43474"/>
        <dbReference type="ChEBI" id="CHEBI:57972"/>
        <dbReference type="ChEBI" id="CHEBI:70757"/>
        <dbReference type="ChEBI" id="CHEBI:83898"/>
        <dbReference type="ChEBI" id="CHEBI:456216"/>
        <dbReference type="EC" id="6.3.2.8"/>
    </reaction>
</comment>
<comment type="pathway">
    <text evidence="1">Cell wall biogenesis; peptidoglycan biosynthesis.</text>
</comment>
<comment type="subcellular location">
    <subcellularLocation>
        <location evidence="1">Cytoplasm</location>
    </subcellularLocation>
</comment>
<comment type="similarity">
    <text evidence="1">Belongs to the MurCDEF family.</text>
</comment>
<reference key="1">
    <citation type="journal article" date="2005" name="J. Infect. Dis.">
        <title>Genome sequence of a serotype M28 strain of group A Streptococcus: potential new insights into puerperal sepsis and bacterial disease specificity.</title>
        <authorList>
            <person name="Green N.M."/>
            <person name="Zhang S."/>
            <person name="Porcella S.F."/>
            <person name="Nagiec M.J."/>
            <person name="Barbian K.D."/>
            <person name="Beres S.B."/>
            <person name="Lefebvre R.B."/>
            <person name="Musser J.M."/>
        </authorList>
    </citation>
    <scope>NUCLEOTIDE SEQUENCE [LARGE SCALE GENOMIC DNA]</scope>
    <source>
        <strain>MGAS6180</strain>
    </source>
</reference>
<organism>
    <name type="scientific">Streptococcus pyogenes serotype M28 (strain MGAS6180)</name>
    <dbReference type="NCBI Taxonomy" id="319701"/>
    <lineage>
        <taxon>Bacteria</taxon>
        <taxon>Bacillati</taxon>
        <taxon>Bacillota</taxon>
        <taxon>Bacilli</taxon>
        <taxon>Lactobacillales</taxon>
        <taxon>Streptococcaceae</taxon>
        <taxon>Streptococcus</taxon>
    </lineage>
</organism>
<sequence>MSKTYHFIGIKGSGMSALALMLHQMGHKVQGSDVEKYYFTQRGLEQAGITILPFSEDNITPDMELIVGNAFRENNKEVAYALRHQIPFKRYHDFLGDFMKSFISFAVAGAHGKTSTTGLLSHVLKNITDTSYLIGDGTGRGSANAQYFVFESDEYERHFMPYHPEYSIITNIDFDHPDYFTGIADVRNAFNDYAKQVKKALFVYGEDDELKKIEAPAPIYYYGFEEGNDFIAYDITRTTNGSDFKVKHQGEVIGQFHVPAYGKHNILNATAVIANLFVAGIDTALVADHLKTFSGVKRRFTEKIINDTIIIDDFAHHPTEIVATIDAARQKYPSKEIVAIFQPHTFTRTIALLEDFACALNEADSVYLAQIYGSAREVDKGEVKVEDLAAKIIKPSQVVTVENVSPLLDHDNAVYVFMGAGDIQLYEHSFEELLANLTKNNQ</sequence>
<proteinExistence type="inferred from homology"/>
<feature type="chain" id="PRO_0000242602" description="UDP-N-acetylmuramate--L-alanine ligase">
    <location>
        <begin position="1"/>
        <end position="442"/>
    </location>
</feature>
<feature type="binding site" evidence="1">
    <location>
        <begin position="109"/>
        <end position="115"/>
    </location>
    <ligand>
        <name>ATP</name>
        <dbReference type="ChEBI" id="CHEBI:30616"/>
    </ligand>
</feature>
<protein>
    <recommendedName>
        <fullName evidence="1">UDP-N-acetylmuramate--L-alanine ligase</fullName>
        <ecNumber evidence="1">6.3.2.8</ecNumber>
    </recommendedName>
    <alternativeName>
        <fullName evidence="1">UDP-N-acetylmuramoyl-L-alanine synthetase</fullName>
    </alternativeName>
</protein>
<gene>
    <name evidence="1" type="primary">murC</name>
    <name type="ordered locus">M28_Spy0282</name>
</gene>
<accession>Q48V60</accession>